<reference key="1">
    <citation type="journal article" date="2007" name="J. Bacteriol.">
        <title>Genome sequence of Avery's virulent serotype 2 strain D39 of Streptococcus pneumoniae and comparison with that of unencapsulated laboratory strain R6.</title>
        <authorList>
            <person name="Lanie J.A."/>
            <person name="Ng W.-L."/>
            <person name="Kazmierczak K.M."/>
            <person name="Andrzejewski T.M."/>
            <person name="Davidsen T.M."/>
            <person name="Wayne K.J."/>
            <person name="Tettelin H."/>
            <person name="Glass J.I."/>
            <person name="Winkler M.E."/>
        </authorList>
    </citation>
    <scope>NUCLEOTIDE SEQUENCE [LARGE SCALE GENOMIC DNA]</scope>
    <source>
        <strain>D39 / NCTC 7466</strain>
    </source>
</reference>
<dbReference type="EMBL" id="CP000410">
    <property type="protein sequence ID" value="ABJ53727.1"/>
    <property type="molecule type" value="Genomic_DNA"/>
</dbReference>
<dbReference type="RefSeq" id="WP_001061169.1">
    <property type="nucleotide sequence ID" value="NZ_JAMLJR010000001.1"/>
</dbReference>
<dbReference type="SMR" id="Q04LQ9"/>
<dbReference type="PaxDb" id="373153-SPD_0538"/>
<dbReference type="KEGG" id="spd:SPD_0538"/>
<dbReference type="eggNOG" id="COG0322">
    <property type="taxonomic scope" value="Bacteria"/>
</dbReference>
<dbReference type="HOGENOM" id="CLU_014841_3_2_9"/>
<dbReference type="BioCyc" id="SPNE373153:G1G6V-591-MONOMER"/>
<dbReference type="Proteomes" id="UP000001452">
    <property type="component" value="Chromosome"/>
</dbReference>
<dbReference type="GO" id="GO:0005737">
    <property type="term" value="C:cytoplasm"/>
    <property type="evidence" value="ECO:0007669"/>
    <property type="project" value="UniProtKB-SubCell"/>
</dbReference>
<dbReference type="GO" id="GO:0009380">
    <property type="term" value="C:excinuclease repair complex"/>
    <property type="evidence" value="ECO:0007669"/>
    <property type="project" value="InterPro"/>
</dbReference>
<dbReference type="GO" id="GO:0003677">
    <property type="term" value="F:DNA binding"/>
    <property type="evidence" value="ECO:0007669"/>
    <property type="project" value="UniProtKB-UniRule"/>
</dbReference>
<dbReference type="GO" id="GO:0009381">
    <property type="term" value="F:excinuclease ABC activity"/>
    <property type="evidence" value="ECO:0007669"/>
    <property type="project" value="UniProtKB-UniRule"/>
</dbReference>
<dbReference type="GO" id="GO:0006289">
    <property type="term" value="P:nucleotide-excision repair"/>
    <property type="evidence" value="ECO:0007669"/>
    <property type="project" value="UniProtKB-UniRule"/>
</dbReference>
<dbReference type="GO" id="GO:0009432">
    <property type="term" value="P:SOS response"/>
    <property type="evidence" value="ECO:0007669"/>
    <property type="project" value="UniProtKB-UniRule"/>
</dbReference>
<dbReference type="CDD" id="cd10434">
    <property type="entry name" value="GIY-YIG_UvrC_Cho"/>
    <property type="match status" value="1"/>
</dbReference>
<dbReference type="FunFam" id="3.30.420.340:FF:000002">
    <property type="entry name" value="UvrABC system protein C"/>
    <property type="match status" value="1"/>
</dbReference>
<dbReference type="FunFam" id="3.40.1440.10:FF:000001">
    <property type="entry name" value="UvrABC system protein C"/>
    <property type="match status" value="1"/>
</dbReference>
<dbReference type="FunFam" id="4.10.860.10:FF:000007">
    <property type="entry name" value="UvrABC system protein C"/>
    <property type="match status" value="1"/>
</dbReference>
<dbReference type="Gene3D" id="1.10.150.20">
    <property type="entry name" value="5' to 3' exonuclease, C-terminal subdomain"/>
    <property type="match status" value="1"/>
</dbReference>
<dbReference type="Gene3D" id="3.40.1440.10">
    <property type="entry name" value="GIY-YIG endonuclease"/>
    <property type="match status" value="1"/>
</dbReference>
<dbReference type="Gene3D" id="4.10.860.10">
    <property type="entry name" value="UVR domain"/>
    <property type="match status" value="1"/>
</dbReference>
<dbReference type="Gene3D" id="3.30.420.340">
    <property type="entry name" value="UvrC, RNAse H endonuclease domain"/>
    <property type="match status" value="1"/>
</dbReference>
<dbReference type="HAMAP" id="MF_00203">
    <property type="entry name" value="UvrC"/>
    <property type="match status" value="1"/>
</dbReference>
<dbReference type="InterPro" id="IPR000305">
    <property type="entry name" value="GIY-YIG_endonuc"/>
</dbReference>
<dbReference type="InterPro" id="IPR035901">
    <property type="entry name" value="GIY-YIG_endonuc_sf"/>
</dbReference>
<dbReference type="InterPro" id="IPR047296">
    <property type="entry name" value="GIY-YIG_UvrC_Cho"/>
</dbReference>
<dbReference type="InterPro" id="IPR010994">
    <property type="entry name" value="RuvA_2-like"/>
</dbReference>
<dbReference type="InterPro" id="IPR001943">
    <property type="entry name" value="UVR_dom"/>
</dbReference>
<dbReference type="InterPro" id="IPR036876">
    <property type="entry name" value="UVR_dom_sf"/>
</dbReference>
<dbReference type="InterPro" id="IPR050066">
    <property type="entry name" value="UvrABC_protein_C"/>
</dbReference>
<dbReference type="InterPro" id="IPR004791">
    <property type="entry name" value="UvrC"/>
</dbReference>
<dbReference type="InterPro" id="IPR001162">
    <property type="entry name" value="UvrC_RNase_H_dom"/>
</dbReference>
<dbReference type="InterPro" id="IPR038476">
    <property type="entry name" value="UvrC_RNase_H_dom_sf"/>
</dbReference>
<dbReference type="NCBIfam" id="TIGR00194">
    <property type="entry name" value="uvrC"/>
    <property type="match status" value="1"/>
</dbReference>
<dbReference type="PANTHER" id="PTHR30562:SF1">
    <property type="entry name" value="UVRABC SYSTEM PROTEIN C"/>
    <property type="match status" value="1"/>
</dbReference>
<dbReference type="PANTHER" id="PTHR30562">
    <property type="entry name" value="UVRC/OXIDOREDUCTASE"/>
    <property type="match status" value="1"/>
</dbReference>
<dbReference type="Pfam" id="PF01541">
    <property type="entry name" value="GIY-YIG"/>
    <property type="match status" value="1"/>
</dbReference>
<dbReference type="Pfam" id="PF02151">
    <property type="entry name" value="UVR"/>
    <property type="match status" value="1"/>
</dbReference>
<dbReference type="Pfam" id="PF22920">
    <property type="entry name" value="UvrC_RNaseH"/>
    <property type="match status" value="1"/>
</dbReference>
<dbReference type="Pfam" id="PF08459">
    <property type="entry name" value="UvrC_RNaseH_dom"/>
    <property type="match status" value="1"/>
</dbReference>
<dbReference type="SMART" id="SM00465">
    <property type="entry name" value="GIYc"/>
    <property type="match status" value="1"/>
</dbReference>
<dbReference type="SUPFAM" id="SSF46600">
    <property type="entry name" value="C-terminal UvrC-binding domain of UvrB"/>
    <property type="match status" value="1"/>
</dbReference>
<dbReference type="SUPFAM" id="SSF82771">
    <property type="entry name" value="GIY-YIG endonuclease"/>
    <property type="match status" value="1"/>
</dbReference>
<dbReference type="SUPFAM" id="SSF47781">
    <property type="entry name" value="RuvA domain 2-like"/>
    <property type="match status" value="1"/>
</dbReference>
<dbReference type="PROSITE" id="PS50164">
    <property type="entry name" value="GIY_YIG"/>
    <property type="match status" value="1"/>
</dbReference>
<dbReference type="PROSITE" id="PS50151">
    <property type="entry name" value="UVR"/>
    <property type="match status" value="1"/>
</dbReference>
<dbReference type="PROSITE" id="PS50165">
    <property type="entry name" value="UVRC"/>
    <property type="match status" value="1"/>
</dbReference>
<accession>Q04LQ9</accession>
<keyword id="KW-0963">Cytoplasm</keyword>
<keyword id="KW-0227">DNA damage</keyword>
<keyword id="KW-0228">DNA excision</keyword>
<keyword id="KW-0234">DNA repair</keyword>
<keyword id="KW-0267">Excision nuclease</keyword>
<keyword id="KW-1185">Reference proteome</keyword>
<keyword id="KW-0742">SOS response</keyword>
<organism>
    <name type="scientific">Streptococcus pneumoniae serotype 2 (strain D39 / NCTC 7466)</name>
    <dbReference type="NCBI Taxonomy" id="373153"/>
    <lineage>
        <taxon>Bacteria</taxon>
        <taxon>Bacillati</taxon>
        <taxon>Bacillota</taxon>
        <taxon>Bacilli</taxon>
        <taxon>Lactobacillales</taxon>
        <taxon>Streptococcaceae</taxon>
        <taxon>Streptococcus</taxon>
    </lineage>
</organism>
<proteinExistence type="inferred from homology"/>
<feature type="chain" id="PRO_1000077851" description="UvrABC system protein C">
    <location>
        <begin position="1"/>
        <end position="614"/>
    </location>
</feature>
<feature type="domain" description="GIY-YIG" evidence="1">
    <location>
        <begin position="14"/>
        <end position="91"/>
    </location>
</feature>
<feature type="domain" description="UVR" evidence="1">
    <location>
        <begin position="196"/>
        <end position="231"/>
    </location>
</feature>
<feature type="region of interest" description="Disordered" evidence="2">
    <location>
        <begin position="595"/>
        <end position="614"/>
    </location>
</feature>
<feature type="compositionally biased region" description="Basic and acidic residues" evidence="2">
    <location>
        <begin position="599"/>
        <end position="614"/>
    </location>
</feature>
<sequence length="614" mass="70457">MNNLIKSKLELLPTSPGCYIHKDKNGTIIYVGKAKNLRNRVRSYFRGSHDTKTEALVSEIVDFEFIVTESNIEALLLEINLIKENKPKYNIMLKDDKSYPFIKITNERYPRLIITRQVKKDGSLYFGPYPDVGAANEIKRLLDRIFPFRKCTNPPSKVCFYYHIGQCMAHTICKKDEAYFKSMAQEVSDFLKGQDDKIIDDLKSKMAVAAQSMEFERAAEYRDLIQAIGTLRTKQRVMAKDLQNRDVFGYYVDKGWMCVQVFFVRQGKLIERDVNLFPYFNDPDEDFLTYVGQFYQEKSHLVPNEVLIPQDIDEEAVKALVDSKILKPQRGEKKQLVNLAIKNARVSLEQKFNLLEKSVEKTQGAIENLGRLLQIPTPVRIESFDNSNIMGTSPVSAMVVFVNGKPSKKDYRKYKIKTVVGPDDYASMREVIRRRYGRVQREALTPPDLIVIDGGQGQVNIAKQVIQEELGLDIPIAGLQKNDKHQTHELLFGDPLEVVDLSRNSQEFFLLQRIQDEVHRFAITFHRQLRSKNSFSSQLDGIDGLGPKRKQNLMRHFKSLTKIKEASVDEIVEVGVPRVVAEAVQRKLNPQGEALSQVAEERVDYQTEGNHNEP</sequence>
<gene>
    <name evidence="1" type="primary">uvrC</name>
    <name type="ordered locus">SPD_0538</name>
</gene>
<comment type="function">
    <text evidence="1">The UvrABC repair system catalyzes the recognition and processing of DNA lesions. UvrC both incises the 5' and 3' sides of the lesion. The N-terminal half is responsible for the 3' incision and the C-terminal half is responsible for the 5' incision.</text>
</comment>
<comment type="subunit">
    <text evidence="1">Interacts with UvrB in an incision complex.</text>
</comment>
<comment type="subcellular location">
    <subcellularLocation>
        <location evidence="1">Cytoplasm</location>
    </subcellularLocation>
</comment>
<comment type="similarity">
    <text evidence="1">Belongs to the UvrC family.</text>
</comment>
<evidence type="ECO:0000255" key="1">
    <source>
        <dbReference type="HAMAP-Rule" id="MF_00203"/>
    </source>
</evidence>
<evidence type="ECO:0000256" key="2">
    <source>
        <dbReference type="SAM" id="MobiDB-lite"/>
    </source>
</evidence>
<protein>
    <recommendedName>
        <fullName evidence="1">UvrABC system protein C</fullName>
        <shortName evidence="1">Protein UvrC</shortName>
    </recommendedName>
    <alternativeName>
        <fullName evidence="1">Excinuclease ABC subunit C</fullName>
    </alternativeName>
</protein>
<name>UVRC_STRP2</name>